<accession>Q9IA95</accession>
<accession>Q4U3E3</accession>
<sequence>MWRGLPALALAALLLLGRAPAGRAAACEPVRIPLCKPLPWNMTKMPNHLHHSTQANAVLAMEQFEGLLGTNCSPDLLFFLCAMYAPICTIDFQHEPIKPCKSVCERARAGCEPVLIRYRHAWPESLACDELPLYDRGVCISPEAIVTAEGADFPMDSNNGNCRGTGIERCKCKPIKATQKTYLRNNYNYVIRAKVKEVKTKCHDVTAVVEVKEILKSSLVNIPKDTVNLYTNSGCLCPPLSANEEYIIMGYEDEERSRLLLVEGSIAEKWKDRLGKKVKRWDQKLRHLGKGKGEPGQSDSALKTGKPGNARQTRS</sequence>
<name>SFRP3_CHICK</name>
<feature type="signal peptide" evidence="2">
    <location>
        <begin position="1"/>
        <end position="21"/>
    </location>
</feature>
<feature type="chain" id="PRO_0000032549" description="Secreted frizzled-related protein 3">
    <location>
        <begin position="22"/>
        <end position="315"/>
    </location>
</feature>
<feature type="domain" description="FZ" evidence="3">
    <location>
        <begin position="22"/>
        <end position="142"/>
    </location>
</feature>
<feature type="domain" description="NTR" evidence="4">
    <location>
        <begin position="170"/>
        <end position="290"/>
    </location>
</feature>
<feature type="region of interest" description="Disordered" evidence="5">
    <location>
        <begin position="284"/>
        <end position="315"/>
    </location>
</feature>
<feature type="glycosylation site" description="N-linked (GlcNAc...) asparagine" evidence="2">
    <location>
        <position position="41"/>
    </location>
</feature>
<feature type="disulfide bond" evidence="1">
    <location>
        <begin position="27"/>
        <end position="88"/>
    </location>
</feature>
<feature type="disulfide bond" evidence="1">
    <location>
        <begin position="35"/>
        <end position="81"/>
    </location>
</feature>
<feature type="disulfide bond" evidence="1">
    <location>
        <begin position="72"/>
        <end position="111"/>
    </location>
</feature>
<feature type="disulfide bond" evidence="1">
    <location>
        <begin position="100"/>
        <end position="139"/>
    </location>
</feature>
<feature type="disulfide bond" evidence="1">
    <location>
        <begin position="104"/>
        <end position="128"/>
    </location>
</feature>
<organism>
    <name type="scientific">Gallus gallus</name>
    <name type="common">Chicken</name>
    <dbReference type="NCBI Taxonomy" id="9031"/>
    <lineage>
        <taxon>Eukaryota</taxon>
        <taxon>Metazoa</taxon>
        <taxon>Chordata</taxon>
        <taxon>Craniata</taxon>
        <taxon>Vertebrata</taxon>
        <taxon>Euteleostomi</taxon>
        <taxon>Archelosauria</taxon>
        <taxon>Archosauria</taxon>
        <taxon>Dinosauria</taxon>
        <taxon>Saurischia</taxon>
        <taxon>Theropoda</taxon>
        <taxon>Coelurosauria</taxon>
        <taxon>Aves</taxon>
        <taxon>Neognathae</taxon>
        <taxon>Galloanserae</taxon>
        <taxon>Galliformes</taxon>
        <taxon>Phasianidae</taxon>
        <taxon>Phasianinae</taxon>
        <taxon>Gallus</taxon>
    </lineage>
</organism>
<keyword id="KW-0217">Developmental protein</keyword>
<keyword id="KW-0221">Differentiation</keyword>
<keyword id="KW-1015">Disulfide bond</keyword>
<keyword id="KW-0325">Glycoprotein</keyword>
<keyword id="KW-1185">Reference proteome</keyword>
<keyword id="KW-0964">Secreted</keyword>
<keyword id="KW-0732">Signal</keyword>
<keyword id="KW-0879">Wnt signaling pathway</keyword>
<reference key="1">
    <citation type="journal article" date="2000" name="Dev. Biol.">
        <title>Cloning and expression of the Wnt antagonists Sfrp-2 and Frzb during chick development.</title>
        <authorList>
            <person name="Ladher R.K."/>
            <person name="Church V.L."/>
            <person name="Allen S."/>
            <person name="Robson L."/>
            <person name="Abdelfattah A."/>
            <person name="Brown N.A."/>
            <person name="Hattersley G."/>
            <person name="Rosen V."/>
            <person name="Luyten F.P."/>
            <person name="Dale L."/>
            <person name="Francis-West P.H."/>
        </authorList>
    </citation>
    <scope>NUCLEOTIDE SEQUENCE [MRNA]</scope>
    <scope>DEVELOPMENTAL STAGE</scope>
    <source>
        <tissue>Embryo</tissue>
    </source>
</reference>
<reference key="2">
    <citation type="journal article" date="2006" name="Dev. Dyn.">
        <title>Differential inhibition of Wnt-3a by Sfrp-1, Sfrp-2, and Sfrp-3.</title>
        <authorList>
            <person name="Galli L.M."/>
            <person name="Barnes T."/>
            <person name="Cheng T."/>
            <person name="Acosta L."/>
            <person name="Anglade A."/>
            <person name="Willert K."/>
            <person name="Nusse R."/>
            <person name="Burrus L.W."/>
        </authorList>
    </citation>
    <scope>NUCLEOTIDE SEQUENCE [MRNA]</scope>
</reference>
<reference key="3">
    <citation type="journal article" date="2002" name="Dev. Biol.">
        <title>The Wnt antagonist Frzb-1 regulates chondrocyte maturation and long bone development during limb skeletogenesis.</title>
        <authorList>
            <person name="Enomoto-Iwamoto M."/>
            <person name="Kitagaki J."/>
            <person name="Koyama E."/>
            <person name="Tamamura Y."/>
            <person name="Wu C."/>
            <person name="Kanatani N."/>
            <person name="Koike T."/>
            <person name="Okada H."/>
            <person name="Komori T."/>
            <person name="Yoneda T."/>
            <person name="Church V.L."/>
            <person name="Francis-West P.H."/>
            <person name="Kurisu K."/>
            <person name="Nohno T."/>
            <person name="Pacifici M."/>
            <person name="Iwamoto M."/>
        </authorList>
    </citation>
    <scope>DEVELOPMENTAL STAGE</scope>
    <scope>FUNCTION</scope>
</reference>
<gene>
    <name type="primary">FRZB</name>
    <name type="synonym">SFRP3</name>
</gene>
<comment type="function">
    <text evidence="7">Soluble frizzled-related proteins (sFRPS) function as modulators of Wnt signaling through direct interaction with Wnts. They have a role in regulating cell growth and differentiation in specific cell types. SFRP3/FRZB appears to be involved in limb skeletogenesis. Antagonist of Wnt8 signaling. Regulates chondrocyte maturation and long bone development.</text>
</comment>
<comment type="subcellular location">
    <subcellularLocation>
        <location evidence="1">Secreted</location>
    </subcellularLocation>
</comment>
<comment type="developmental stage">
    <text evidence="6 7">At stage 7 of embryonic development, expressed in the neural plate with lower expression in the midline. At stage 9, expression restricted to the dorsal neural tube and cranial neural crest. At stage 12, expressed in the lateral plate mesoderm. In the developing trunk, expressed, from stages 9-12, in the ventral migrating neural crest with some expression at stage 12 in the dorsal streams From stage 15, expressed in the endocardial cells of the outflow tract of the developing heart. From stage 18, expression found in the epibranchial placodes, in endocardial and mesenchymal cells of the developing atrioventricular canal and of the outflow tract cushions. Expression in these regions of the developing heart continue until stage 26. During limb development, low expression found, by stage 18, in the developing limb buds, By stage 20, highly expressed in the ventral mesenchyme of both fore- and hind-limb buds. By stage 24, expression localized to the central core of the developing limb bud, which contains the chondrogenic precursors. Also expressed in the surrounding nonchondrogenic mesenchyme. Later expression confined to the perichondrium and to the epiphyses of the early developing skeletal elements.</text>
</comment>
<comment type="domain">
    <text evidence="1">The FZ domain is involved in binding with Wnt ligands.</text>
</comment>
<comment type="similarity">
    <text evidence="8">Belongs to the secreted frizzled-related protein (sFRP) family.</text>
</comment>
<evidence type="ECO:0000250" key="1"/>
<evidence type="ECO:0000255" key="2"/>
<evidence type="ECO:0000255" key="3">
    <source>
        <dbReference type="PROSITE-ProRule" id="PRU00090"/>
    </source>
</evidence>
<evidence type="ECO:0000255" key="4">
    <source>
        <dbReference type="PROSITE-ProRule" id="PRU00295"/>
    </source>
</evidence>
<evidence type="ECO:0000256" key="5">
    <source>
        <dbReference type="SAM" id="MobiDB-lite"/>
    </source>
</evidence>
<evidence type="ECO:0000269" key="6">
    <source>
    </source>
</evidence>
<evidence type="ECO:0000269" key="7">
    <source>
    </source>
</evidence>
<evidence type="ECO:0000305" key="8"/>
<dbReference type="EMBL" id="AF218057">
    <property type="protein sequence ID" value="AAF27643.1"/>
    <property type="molecule type" value="mRNA"/>
</dbReference>
<dbReference type="EMBL" id="DQ017062">
    <property type="protein sequence ID" value="AAY42147.1"/>
    <property type="molecule type" value="mRNA"/>
</dbReference>
<dbReference type="RefSeq" id="NP_990103.1">
    <property type="nucleotide sequence ID" value="NM_204772.3"/>
</dbReference>
<dbReference type="SMR" id="Q9IA95"/>
<dbReference type="FunCoup" id="Q9IA95">
    <property type="interactions" value="89"/>
</dbReference>
<dbReference type="STRING" id="9031.ENSGALP00000004354"/>
<dbReference type="GlyCosmos" id="Q9IA95">
    <property type="glycosylation" value="1 site, No reported glycans"/>
</dbReference>
<dbReference type="GlyGen" id="Q9IA95">
    <property type="glycosylation" value="1 site"/>
</dbReference>
<dbReference type="PaxDb" id="9031-ENSGALP00000004354"/>
<dbReference type="Ensembl" id="ENSGALT00010026870.1">
    <property type="protein sequence ID" value="ENSGALP00010015312.1"/>
    <property type="gene ID" value="ENSGALG00010011251.1"/>
</dbReference>
<dbReference type="GeneID" id="395545"/>
<dbReference type="KEGG" id="gga:395545"/>
<dbReference type="CTD" id="2487"/>
<dbReference type="VEuPathDB" id="HostDB:geneid_395545"/>
<dbReference type="eggNOG" id="KOG3577">
    <property type="taxonomic scope" value="Eukaryota"/>
</dbReference>
<dbReference type="GeneTree" id="ENSGT00940000160494"/>
<dbReference type="InParanoid" id="Q9IA95"/>
<dbReference type="OMA" id="NAERCKC"/>
<dbReference type="OrthoDB" id="5946121at2759"/>
<dbReference type="PhylomeDB" id="Q9IA95"/>
<dbReference type="PRO" id="PR:Q9IA95"/>
<dbReference type="Proteomes" id="UP000000539">
    <property type="component" value="Chromosome 7"/>
</dbReference>
<dbReference type="GO" id="GO:0005737">
    <property type="term" value="C:cytoplasm"/>
    <property type="evidence" value="ECO:0000318"/>
    <property type="project" value="GO_Central"/>
</dbReference>
<dbReference type="GO" id="GO:0005615">
    <property type="term" value="C:extracellular space"/>
    <property type="evidence" value="ECO:0000318"/>
    <property type="project" value="GO_Central"/>
</dbReference>
<dbReference type="GO" id="GO:0017147">
    <property type="term" value="F:Wnt-protein binding"/>
    <property type="evidence" value="ECO:0000250"/>
    <property type="project" value="AgBase"/>
</dbReference>
<dbReference type="GO" id="GO:0060070">
    <property type="term" value="P:canonical Wnt signaling pathway"/>
    <property type="evidence" value="ECO:0000318"/>
    <property type="project" value="GO_Central"/>
</dbReference>
<dbReference type="GO" id="GO:0090103">
    <property type="term" value="P:cochlea morphogenesis"/>
    <property type="evidence" value="ECO:0007669"/>
    <property type="project" value="Ensembl"/>
</dbReference>
<dbReference type="GO" id="GO:0060029">
    <property type="term" value="P:convergent extension involved in organogenesis"/>
    <property type="evidence" value="ECO:0007669"/>
    <property type="project" value="Ensembl"/>
</dbReference>
<dbReference type="GO" id="GO:0002064">
    <property type="term" value="P:epithelial cell development"/>
    <property type="evidence" value="ECO:0007669"/>
    <property type="project" value="Ensembl"/>
</dbReference>
<dbReference type="GO" id="GO:0070365">
    <property type="term" value="P:hepatocyte differentiation"/>
    <property type="evidence" value="ECO:0007669"/>
    <property type="project" value="Ensembl"/>
</dbReference>
<dbReference type="GO" id="GO:0090090">
    <property type="term" value="P:negative regulation of canonical Wnt signaling pathway"/>
    <property type="evidence" value="ECO:0007669"/>
    <property type="project" value="Ensembl"/>
</dbReference>
<dbReference type="GO" id="GO:0061037">
    <property type="term" value="P:negative regulation of cartilage development"/>
    <property type="evidence" value="ECO:0007669"/>
    <property type="project" value="Ensembl"/>
</dbReference>
<dbReference type="GO" id="GO:0010721">
    <property type="term" value="P:negative regulation of cell development"/>
    <property type="evidence" value="ECO:0007669"/>
    <property type="project" value="Ensembl"/>
</dbReference>
<dbReference type="GO" id="GO:0030308">
    <property type="term" value="P:negative regulation of cell growth"/>
    <property type="evidence" value="ECO:0007669"/>
    <property type="project" value="Ensembl"/>
</dbReference>
<dbReference type="GO" id="GO:0008285">
    <property type="term" value="P:negative regulation of cell population proliferation"/>
    <property type="evidence" value="ECO:0007669"/>
    <property type="project" value="Ensembl"/>
</dbReference>
<dbReference type="GO" id="GO:0070367">
    <property type="term" value="P:negative regulation of hepatocyte differentiation"/>
    <property type="evidence" value="ECO:0007669"/>
    <property type="project" value="Ensembl"/>
</dbReference>
<dbReference type="GO" id="GO:0030178">
    <property type="term" value="P:negative regulation of Wnt signaling pathway"/>
    <property type="evidence" value="ECO:0000250"/>
    <property type="project" value="AgBase"/>
</dbReference>
<dbReference type="GO" id="GO:0014033">
    <property type="term" value="P:neural crest cell differentiation"/>
    <property type="evidence" value="ECO:0007669"/>
    <property type="project" value="Ensembl"/>
</dbReference>
<dbReference type="GO" id="GO:0035567">
    <property type="term" value="P:non-canonical Wnt signaling pathway"/>
    <property type="evidence" value="ECO:0000318"/>
    <property type="project" value="GO_Central"/>
</dbReference>
<dbReference type="GO" id="GO:0043065">
    <property type="term" value="P:positive regulation of apoptotic process"/>
    <property type="evidence" value="ECO:0007669"/>
    <property type="project" value="Ensembl"/>
</dbReference>
<dbReference type="GO" id="GO:0045600">
    <property type="term" value="P:positive regulation of fat cell differentiation"/>
    <property type="evidence" value="ECO:0007669"/>
    <property type="project" value="Ensembl"/>
</dbReference>
<dbReference type="GO" id="GO:0061053">
    <property type="term" value="P:somite development"/>
    <property type="evidence" value="ECO:0007669"/>
    <property type="project" value="Ensembl"/>
</dbReference>
<dbReference type="CDD" id="cd07441">
    <property type="entry name" value="CRD_SFRP3"/>
    <property type="match status" value="1"/>
</dbReference>
<dbReference type="CDD" id="cd03581">
    <property type="entry name" value="NTR_Sfrp3_like"/>
    <property type="match status" value="1"/>
</dbReference>
<dbReference type="FunFam" id="2.40.50.120:FF:000010">
    <property type="entry name" value="secreted frizzled-related protein 3"/>
    <property type="match status" value="1"/>
</dbReference>
<dbReference type="FunFam" id="1.10.2000.10:FF:000005">
    <property type="entry name" value="secreted frizzled-related protein 4"/>
    <property type="match status" value="1"/>
</dbReference>
<dbReference type="Gene3D" id="2.40.50.120">
    <property type="match status" value="1"/>
</dbReference>
<dbReference type="Gene3D" id="1.10.2000.10">
    <property type="entry name" value="Frizzled cysteine-rich domain"/>
    <property type="match status" value="1"/>
</dbReference>
<dbReference type="InterPro" id="IPR015526">
    <property type="entry name" value="Frizzled/SFRP"/>
</dbReference>
<dbReference type="InterPro" id="IPR020067">
    <property type="entry name" value="Frizzled_dom"/>
</dbReference>
<dbReference type="InterPro" id="IPR036790">
    <property type="entry name" value="Frizzled_dom_sf"/>
</dbReference>
<dbReference type="InterPro" id="IPR001134">
    <property type="entry name" value="Netrin_domain"/>
</dbReference>
<dbReference type="InterPro" id="IPR018933">
    <property type="entry name" value="Netrin_module_non-TIMP"/>
</dbReference>
<dbReference type="InterPro" id="IPR035813">
    <property type="entry name" value="NTR_Sfrp3"/>
</dbReference>
<dbReference type="InterPro" id="IPR041759">
    <property type="entry name" value="SFRP3_CRD"/>
</dbReference>
<dbReference type="InterPro" id="IPR008993">
    <property type="entry name" value="TIMP-like_OB-fold"/>
</dbReference>
<dbReference type="PANTHER" id="PTHR11309">
    <property type="entry name" value="FRIZZLED"/>
    <property type="match status" value="1"/>
</dbReference>
<dbReference type="PANTHER" id="PTHR11309:SF97">
    <property type="entry name" value="SECRETED FRIZZLED-RELATED PROTEIN 3"/>
    <property type="match status" value="1"/>
</dbReference>
<dbReference type="Pfam" id="PF01392">
    <property type="entry name" value="Fz"/>
    <property type="match status" value="1"/>
</dbReference>
<dbReference type="Pfam" id="PF01759">
    <property type="entry name" value="NTR"/>
    <property type="match status" value="1"/>
</dbReference>
<dbReference type="SMART" id="SM00643">
    <property type="entry name" value="C345C"/>
    <property type="match status" value="1"/>
</dbReference>
<dbReference type="SMART" id="SM00063">
    <property type="entry name" value="FRI"/>
    <property type="match status" value="1"/>
</dbReference>
<dbReference type="SUPFAM" id="SSF63501">
    <property type="entry name" value="Frizzled cysteine-rich domain"/>
    <property type="match status" value="1"/>
</dbReference>
<dbReference type="SUPFAM" id="SSF50242">
    <property type="entry name" value="TIMP-like"/>
    <property type="match status" value="1"/>
</dbReference>
<dbReference type="PROSITE" id="PS50038">
    <property type="entry name" value="FZ"/>
    <property type="match status" value="1"/>
</dbReference>
<dbReference type="PROSITE" id="PS50189">
    <property type="entry name" value="NTR"/>
    <property type="match status" value="1"/>
</dbReference>
<protein>
    <recommendedName>
        <fullName>Secreted frizzled-related protein 3</fullName>
        <shortName>sFRP-3</shortName>
    </recommendedName>
    <alternativeName>
        <fullName>Frizzled-related protein 1</fullName>
    </alternativeName>
    <alternativeName>
        <fullName>FrzB-1</fullName>
    </alternativeName>
</protein>
<proteinExistence type="evidence at transcript level"/>